<organism>
    <name type="scientific">Xenopus laevis</name>
    <name type="common">African clawed frog</name>
    <dbReference type="NCBI Taxonomy" id="8355"/>
    <lineage>
        <taxon>Eukaryota</taxon>
        <taxon>Metazoa</taxon>
        <taxon>Chordata</taxon>
        <taxon>Craniata</taxon>
        <taxon>Vertebrata</taxon>
        <taxon>Euteleostomi</taxon>
        <taxon>Amphibia</taxon>
        <taxon>Batrachia</taxon>
        <taxon>Anura</taxon>
        <taxon>Pipoidea</taxon>
        <taxon>Pipidae</taxon>
        <taxon>Xenopodinae</taxon>
        <taxon>Xenopus</taxon>
        <taxon>Xenopus</taxon>
    </lineage>
</organism>
<feature type="chain" id="PRO_0000310559" description="THO complex subunit 5 homolog A">
    <location>
        <begin position="1"/>
        <end position="678"/>
    </location>
</feature>
<feature type="region of interest" description="Disordered" evidence="3">
    <location>
        <begin position="1"/>
        <end position="35"/>
    </location>
</feature>
<feature type="region of interest" description="Disordered" evidence="3">
    <location>
        <begin position="294"/>
        <end position="329"/>
    </location>
</feature>
<feature type="short sequence motif" description="Nuclear localization signal" evidence="1">
    <location>
        <begin position="7"/>
        <end position="10"/>
    </location>
</feature>
<feature type="compositionally biased region" description="Basic and acidic residues" evidence="3">
    <location>
        <begin position="14"/>
        <end position="35"/>
    </location>
</feature>
<feature type="compositionally biased region" description="Acidic residues" evidence="3">
    <location>
        <begin position="301"/>
        <end position="314"/>
    </location>
</feature>
<proteinExistence type="evidence at protein level"/>
<sequence>MASDSLKKRKPKVNRNEDVKRGRHEDQEGRYYSEEAEVDVRDPKEDYQLYKDTCLDLQRLMSEIQELKSKGSRDSALEIEEKKVQSCVHFMTLKKLNRLAHIRLKKARDQTHEAKQKVDAYHLQLQNLLYEVMHLQKEITKCLEFKSKHEEIELVSVEEFYSKAPVAISKPEITSTDPHQQTLSRLDWELEQRKRLAEKYKECLASKEKILKEIEIKKEYLNSLQPQLNSIMQASLPVQEYLSMPFDCMHKQYETARHLPAPLYVLFVQASAYSQACDRKLVVTIEGNVEEARALFKPPEDSQDDESDSDAEEEQTTKRRRPTLGVQLDDKRKEMLKRHPLCVTITLKCKEGSTLTLTFYFLMNLNILTVKVKILPAFELSTAISAGDLLNPDLMLSCLYQGDDGKTTPNPANQYQFDKIGILSLSDYISELGHPYIWVQAMGGLHFPTDQPQPAVVADNALSANHMEKTIKLLRTRLLSRLSLHRQFASLEHGSIPVSLECQSFFPAKVISRLTKWNVITYEDYLALPYTKDVIECGLAKETDQYFNLLIERGTAKLNGVVVLNPGYCAVPPVFSLCLNWKGERLSSNDDNIRVMESEVNVYYKELCGPPPGFQLLTNQIQRLCMLLDVYLETERHDNSVEGPHEFPPEKICLRLLRGPSRTKPFKYNYPQGFFSHR</sequence>
<keyword id="KW-0963">Cytoplasm</keyword>
<keyword id="KW-0221">Differentiation</keyword>
<keyword id="KW-0507">mRNA processing</keyword>
<keyword id="KW-0508">mRNA splicing</keyword>
<keyword id="KW-0509">mRNA transport</keyword>
<keyword id="KW-0539">Nucleus</keyword>
<keyword id="KW-1185">Reference proteome</keyword>
<keyword id="KW-0694">RNA-binding</keyword>
<keyword id="KW-0813">Transport</keyword>
<protein>
    <recommendedName>
        <fullName>THO complex subunit 5 homolog A</fullName>
    </recommendedName>
</protein>
<reference key="1">
    <citation type="submission" date="2004-07" db="EMBL/GenBank/DDBJ databases">
        <authorList>
            <consortium name="NIH - Xenopus Gene Collection (XGC) project"/>
        </authorList>
    </citation>
    <scope>NUCLEOTIDE SEQUENCE [LARGE SCALE MRNA]</scope>
    <source>
        <tissue>Ovary</tissue>
    </source>
</reference>
<reference key="2">
    <citation type="journal article" date="2009" name="FEBS Lett.">
        <title>Nuclear localization of the pre-mRNA associating protein THOC7 depends upon its direct interaction with Fms tyrosine kinase interacting protein (FMIP).</title>
        <authorList>
            <person name="El Bounkari O."/>
            <person name="Guria A."/>
            <person name="Klebba-Faerber S."/>
            <person name="Claussen M."/>
            <person name="Pieler T."/>
            <person name="Griffiths J.R."/>
            <person name="Whetton A.D."/>
            <person name="Koch A."/>
            <person name="Tamura T."/>
        </authorList>
    </citation>
    <scope>INTERACTION WITH THOC7</scope>
</reference>
<comment type="function">
    <text evidence="2">Component of the THO subcomplex of the TREX complex which is thought to couple mRNA transcription, processing and nuclear export, and which specifically associates with spliced mRNA and not with unspliced pre-mRNA. Plays a key structural role in the oligomerization of the THO-ddx39b complex. TREX is recruited to spliced mRNAs by a transcription-independent mechanism, binds to mRNA upstream of the exon-junction complex (EJC) and is recruited in a splicing- and cap-dependent manner to a region near the 5' end of the mRNA where it functions in mRNA export to the cytoplasm via the TAP/NXF1 pathway. May be involved in cell differentiation.</text>
</comment>
<comment type="subunit">
    <text evidence="2 4">Component of the THO subcomplex, which is composed of thoc1, thoc2, thoc3, thoc5, thoc6 and thoc7 (By similarity). Component of the transcription/export (TREX) complex at least composed of alyref/thoc4, ddx39b, sarnp/cip29, chtop and the THO subcomplex (By similarity). Interacts with thoc7 (PubMed:19059247).</text>
</comment>
<comment type="subcellular location">
    <subcellularLocation>
        <location evidence="1">Nucleus</location>
    </subcellularLocation>
    <subcellularLocation>
        <location evidence="1">Nucleus speckle</location>
    </subcellularLocation>
    <subcellularLocation>
        <location evidence="1">Cytoplasm</location>
    </subcellularLocation>
    <text evidence="1">Shuttles between nucleus and cytoplasm.</text>
</comment>
<comment type="similarity">
    <text evidence="5">Belongs to the THOC5 family.</text>
</comment>
<name>THO5A_XENLA</name>
<accession>Q6DFL5</accession>
<dbReference type="EMBL" id="BC076720">
    <property type="protein sequence ID" value="AAH76720.1"/>
    <property type="molecule type" value="mRNA"/>
</dbReference>
<dbReference type="RefSeq" id="NP_001086498.1">
    <property type="nucleotide sequence ID" value="NM_001093029.1"/>
</dbReference>
<dbReference type="SMR" id="Q6DFL5"/>
<dbReference type="IntAct" id="Q6DFL5">
    <property type="interactions" value="1"/>
</dbReference>
<dbReference type="MINT" id="Q6DFL5"/>
<dbReference type="DNASU" id="446333"/>
<dbReference type="GeneID" id="446333"/>
<dbReference type="KEGG" id="xla:446333"/>
<dbReference type="AGR" id="Xenbase:XB-GENE-6251494"/>
<dbReference type="CTD" id="446333"/>
<dbReference type="Xenbase" id="XB-GENE-6251494">
    <property type="gene designation" value="thoc5.L"/>
</dbReference>
<dbReference type="OMA" id="YEVMHLK"/>
<dbReference type="OrthoDB" id="20582at2759"/>
<dbReference type="Proteomes" id="UP000186698">
    <property type="component" value="Chromosome 1L"/>
</dbReference>
<dbReference type="Bgee" id="446333">
    <property type="expression patterns" value="Expressed in gastrula and 19 other cell types or tissues"/>
</dbReference>
<dbReference type="GO" id="GO:0005737">
    <property type="term" value="C:cytoplasm"/>
    <property type="evidence" value="ECO:0007669"/>
    <property type="project" value="UniProtKB-SubCell"/>
</dbReference>
<dbReference type="GO" id="GO:0016607">
    <property type="term" value="C:nuclear speck"/>
    <property type="evidence" value="ECO:0007669"/>
    <property type="project" value="UniProtKB-SubCell"/>
</dbReference>
<dbReference type="GO" id="GO:0000445">
    <property type="term" value="C:THO complex part of transcription export complex"/>
    <property type="evidence" value="ECO:0000318"/>
    <property type="project" value="GO_Central"/>
</dbReference>
<dbReference type="GO" id="GO:0003729">
    <property type="term" value="F:mRNA binding"/>
    <property type="evidence" value="ECO:0000318"/>
    <property type="project" value="GO_Central"/>
</dbReference>
<dbReference type="GO" id="GO:0030154">
    <property type="term" value="P:cell differentiation"/>
    <property type="evidence" value="ECO:0007669"/>
    <property type="project" value="UniProtKB-KW"/>
</dbReference>
<dbReference type="GO" id="GO:0006406">
    <property type="term" value="P:mRNA export from nucleus"/>
    <property type="evidence" value="ECO:0000318"/>
    <property type="project" value="GO_Central"/>
</dbReference>
<dbReference type="GO" id="GO:0006397">
    <property type="term" value="P:mRNA processing"/>
    <property type="evidence" value="ECO:0007669"/>
    <property type="project" value="UniProtKB-KW"/>
</dbReference>
<dbReference type="GO" id="GO:0008380">
    <property type="term" value="P:RNA splicing"/>
    <property type="evidence" value="ECO:0007669"/>
    <property type="project" value="UniProtKB-KW"/>
</dbReference>
<dbReference type="InterPro" id="IPR019163">
    <property type="entry name" value="THO_Thoc5"/>
</dbReference>
<dbReference type="PANTHER" id="PTHR13375">
    <property type="entry name" value="FMS INTERACTING PROTEIN"/>
    <property type="match status" value="1"/>
</dbReference>
<dbReference type="PANTHER" id="PTHR13375:SF3">
    <property type="entry name" value="THO COMPLEX SUBUNIT 5 HOMOLOG"/>
    <property type="match status" value="1"/>
</dbReference>
<dbReference type="Pfam" id="PF09766">
    <property type="entry name" value="FmiP_Thoc5"/>
    <property type="match status" value="1"/>
</dbReference>
<evidence type="ECO:0000250" key="1"/>
<evidence type="ECO:0000250" key="2">
    <source>
        <dbReference type="UniProtKB" id="Q13769"/>
    </source>
</evidence>
<evidence type="ECO:0000256" key="3">
    <source>
        <dbReference type="SAM" id="MobiDB-lite"/>
    </source>
</evidence>
<evidence type="ECO:0000269" key="4">
    <source>
    </source>
</evidence>
<evidence type="ECO:0000305" key="5"/>
<gene>
    <name type="primary">thoc5-a</name>
</gene>